<proteinExistence type="inferred from homology"/>
<dbReference type="EC" id="2.4.2.17" evidence="1"/>
<dbReference type="EMBL" id="CP000016">
    <property type="protein sequence ID" value="AAZ41093.1"/>
    <property type="molecule type" value="Genomic_DNA"/>
</dbReference>
<dbReference type="RefSeq" id="WP_011283003.1">
    <property type="nucleotide sequence ID" value="NC_007292.1"/>
</dbReference>
<dbReference type="SMR" id="Q492K4"/>
<dbReference type="STRING" id="291272.BPEN_477"/>
<dbReference type="KEGG" id="bpn:BPEN_477"/>
<dbReference type="eggNOG" id="COG0040">
    <property type="taxonomic scope" value="Bacteria"/>
</dbReference>
<dbReference type="HOGENOM" id="CLU_038115_1_0_6"/>
<dbReference type="OrthoDB" id="9801867at2"/>
<dbReference type="UniPathway" id="UPA00031">
    <property type="reaction ID" value="UER00006"/>
</dbReference>
<dbReference type="Proteomes" id="UP000007794">
    <property type="component" value="Chromosome"/>
</dbReference>
<dbReference type="GO" id="GO:0005737">
    <property type="term" value="C:cytoplasm"/>
    <property type="evidence" value="ECO:0007669"/>
    <property type="project" value="UniProtKB-SubCell"/>
</dbReference>
<dbReference type="GO" id="GO:0005524">
    <property type="term" value="F:ATP binding"/>
    <property type="evidence" value="ECO:0007669"/>
    <property type="project" value="UniProtKB-KW"/>
</dbReference>
<dbReference type="GO" id="GO:0003879">
    <property type="term" value="F:ATP phosphoribosyltransferase activity"/>
    <property type="evidence" value="ECO:0007669"/>
    <property type="project" value="UniProtKB-UniRule"/>
</dbReference>
<dbReference type="GO" id="GO:0000287">
    <property type="term" value="F:magnesium ion binding"/>
    <property type="evidence" value="ECO:0007669"/>
    <property type="project" value="UniProtKB-UniRule"/>
</dbReference>
<dbReference type="GO" id="GO:0000105">
    <property type="term" value="P:L-histidine biosynthetic process"/>
    <property type="evidence" value="ECO:0007669"/>
    <property type="project" value="UniProtKB-UniRule"/>
</dbReference>
<dbReference type="CDD" id="cd13592">
    <property type="entry name" value="PBP2_HisGL2"/>
    <property type="match status" value="1"/>
</dbReference>
<dbReference type="FunFam" id="3.30.70.120:FF:000002">
    <property type="entry name" value="ATP phosphoribosyltransferase"/>
    <property type="match status" value="1"/>
</dbReference>
<dbReference type="FunFam" id="3.40.190.10:FF:000008">
    <property type="entry name" value="ATP phosphoribosyltransferase"/>
    <property type="match status" value="1"/>
</dbReference>
<dbReference type="Gene3D" id="3.30.70.120">
    <property type="match status" value="1"/>
</dbReference>
<dbReference type="Gene3D" id="3.40.190.10">
    <property type="entry name" value="Periplasmic binding protein-like II"/>
    <property type="match status" value="2"/>
</dbReference>
<dbReference type="HAMAP" id="MF_00079">
    <property type="entry name" value="HisG_Long"/>
    <property type="match status" value="1"/>
</dbReference>
<dbReference type="InterPro" id="IPR020621">
    <property type="entry name" value="ATP-PRT_HisG_long"/>
</dbReference>
<dbReference type="InterPro" id="IPR013820">
    <property type="entry name" value="ATP_PRibTrfase_cat"/>
</dbReference>
<dbReference type="InterPro" id="IPR018198">
    <property type="entry name" value="ATP_PRibTrfase_CS"/>
</dbReference>
<dbReference type="InterPro" id="IPR001348">
    <property type="entry name" value="ATP_PRibTrfase_HisG"/>
</dbReference>
<dbReference type="InterPro" id="IPR013115">
    <property type="entry name" value="HisG_C"/>
</dbReference>
<dbReference type="InterPro" id="IPR011322">
    <property type="entry name" value="N-reg_PII-like_a/b"/>
</dbReference>
<dbReference type="InterPro" id="IPR015867">
    <property type="entry name" value="N-reg_PII/ATP_PRibTrfase_C"/>
</dbReference>
<dbReference type="NCBIfam" id="TIGR00070">
    <property type="entry name" value="hisG"/>
    <property type="match status" value="1"/>
</dbReference>
<dbReference type="NCBIfam" id="TIGR03455">
    <property type="entry name" value="HisG_C-term"/>
    <property type="match status" value="1"/>
</dbReference>
<dbReference type="PANTHER" id="PTHR21403:SF8">
    <property type="entry name" value="ATP PHOSPHORIBOSYLTRANSFERASE"/>
    <property type="match status" value="1"/>
</dbReference>
<dbReference type="PANTHER" id="PTHR21403">
    <property type="entry name" value="ATP PHOSPHORIBOSYLTRANSFERASE ATP-PRTASE"/>
    <property type="match status" value="1"/>
</dbReference>
<dbReference type="Pfam" id="PF01634">
    <property type="entry name" value="HisG"/>
    <property type="match status" value="1"/>
</dbReference>
<dbReference type="Pfam" id="PF08029">
    <property type="entry name" value="HisG_C"/>
    <property type="match status" value="1"/>
</dbReference>
<dbReference type="SUPFAM" id="SSF54913">
    <property type="entry name" value="GlnB-like"/>
    <property type="match status" value="1"/>
</dbReference>
<dbReference type="SUPFAM" id="SSF53850">
    <property type="entry name" value="Periplasmic binding protein-like II"/>
    <property type="match status" value="1"/>
</dbReference>
<dbReference type="PROSITE" id="PS01316">
    <property type="entry name" value="ATP_P_PHORIBOSYLTR"/>
    <property type="match status" value="1"/>
</dbReference>
<accession>Q492K4</accession>
<gene>
    <name evidence="1" type="primary">hisG</name>
    <name type="ordered locus">BPEN_477</name>
</gene>
<sequence>MLDRSRLRIAIQKSGRLSKESQQLLEQCGIKINLQQQRLLAFAENMAIDIMRVRDDDIPGLVMDGIVDLGIIGENVLEEALLTRRSQGDNPCYIMLLRLDFGDCRLSMALPIDEPWNGPKSLQGKRIATSYPHLLKQYLDKLGIHFKSCLLNGSVEVAPRAGLADAICDLVSTGATLEANGLHEVEVIYRSKACLIQRSGELSNIKQSLINKLIIRIQGVIQARGSKYIMLHAPAEQLEEIINLLPGAESPTVLPLAGNQHRVAIYMVSNETLFWETMENLKNLGASSILVLPIEKMME</sequence>
<comment type="function">
    <text evidence="1">Catalyzes the condensation of ATP and 5-phosphoribose 1-diphosphate to form N'-(5'-phosphoribosyl)-ATP (PR-ATP). Has a crucial role in the pathway because the rate of histidine biosynthesis seems to be controlled primarily by regulation of HisG enzymatic activity.</text>
</comment>
<comment type="catalytic activity">
    <reaction evidence="1">
        <text>1-(5-phospho-beta-D-ribosyl)-ATP + diphosphate = 5-phospho-alpha-D-ribose 1-diphosphate + ATP</text>
        <dbReference type="Rhea" id="RHEA:18473"/>
        <dbReference type="ChEBI" id="CHEBI:30616"/>
        <dbReference type="ChEBI" id="CHEBI:33019"/>
        <dbReference type="ChEBI" id="CHEBI:58017"/>
        <dbReference type="ChEBI" id="CHEBI:73183"/>
        <dbReference type="EC" id="2.4.2.17"/>
    </reaction>
</comment>
<comment type="cofactor">
    <cofactor evidence="1">
        <name>Mg(2+)</name>
        <dbReference type="ChEBI" id="CHEBI:18420"/>
    </cofactor>
</comment>
<comment type="activity regulation">
    <text evidence="1">Feedback inhibited by histidine.</text>
</comment>
<comment type="pathway">
    <text evidence="1">Amino-acid biosynthesis; L-histidine biosynthesis; L-histidine from 5-phospho-alpha-D-ribose 1-diphosphate: step 1/9.</text>
</comment>
<comment type="subunit">
    <text evidence="1">Equilibrium between an active dimeric form, an inactive hexameric form and higher aggregates. Interconversion between the various forms is largely reversible and is influenced by the natural substrates and inhibitors of the enzyme.</text>
</comment>
<comment type="subcellular location">
    <subcellularLocation>
        <location evidence="1">Cytoplasm</location>
    </subcellularLocation>
</comment>
<comment type="similarity">
    <text evidence="1">Belongs to the ATP phosphoribosyltransferase family. Long subfamily.</text>
</comment>
<name>HIS1_BLOPB</name>
<reference key="1">
    <citation type="journal article" date="2005" name="Genome Res.">
        <title>Genome sequence of Blochmannia pennsylvanicus indicates parallel evolutionary trends among bacterial mutualists of insects.</title>
        <authorList>
            <person name="Degnan P.H."/>
            <person name="Lazarus A.B."/>
            <person name="Wernegreen J.J."/>
        </authorList>
    </citation>
    <scope>NUCLEOTIDE SEQUENCE [LARGE SCALE GENOMIC DNA]</scope>
    <source>
        <strain>BPEN</strain>
    </source>
</reference>
<feature type="chain" id="PRO_1000004447" description="ATP phosphoribosyltransferase">
    <location>
        <begin position="1"/>
        <end position="299"/>
    </location>
</feature>
<keyword id="KW-0028">Amino-acid biosynthesis</keyword>
<keyword id="KW-0067">ATP-binding</keyword>
<keyword id="KW-0963">Cytoplasm</keyword>
<keyword id="KW-0328">Glycosyltransferase</keyword>
<keyword id="KW-0368">Histidine biosynthesis</keyword>
<keyword id="KW-0460">Magnesium</keyword>
<keyword id="KW-0479">Metal-binding</keyword>
<keyword id="KW-0547">Nucleotide-binding</keyword>
<keyword id="KW-1185">Reference proteome</keyword>
<keyword id="KW-0808">Transferase</keyword>
<evidence type="ECO:0000255" key="1">
    <source>
        <dbReference type="HAMAP-Rule" id="MF_00079"/>
    </source>
</evidence>
<protein>
    <recommendedName>
        <fullName evidence="1">ATP phosphoribosyltransferase</fullName>
        <shortName evidence="1">ATP-PRT</shortName>
        <shortName evidence="1">ATP-PRTase</shortName>
        <ecNumber evidence="1">2.4.2.17</ecNumber>
    </recommendedName>
</protein>
<organism>
    <name type="scientific">Blochmanniella pennsylvanica (strain BPEN)</name>
    <dbReference type="NCBI Taxonomy" id="291272"/>
    <lineage>
        <taxon>Bacteria</taxon>
        <taxon>Pseudomonadati</taxon>
        <taxon>Pseudomonadota</taxon>
        <taxon>Gammaproteobacteria</taxon>
        <taxon>Enterobacterales</taxon>
        <taxon>Enterobacteriaceae</taxon>
        <taxon>ant endosymbionts</taxon>
        <taxon>Candidatus Blochmanniella</taxon>
    </lineage>
</organism>